<name>RL36_PHOPR</name>
<evidence type="ECO:0000255" key="1">
    <source>
        <dbReference type="HAMAP-Rule" id="MF_00251"/>
    </source>
</evidence>
<evidence type="ECO:0000305" key="2"/>
<accession>Q6LV95</accession>
<keyword id="KW-1185">Reference proteome</keyword>
<keyword id="KW-0687">Ribonucleoprotein</keyword>
<keyword id="KW-0689">Ribosomal protein</keyword>
<gene>
    <name evidence="1" type="primary">rpmJ</name>
    <name type="ordered locus">PBPRA0341</name>
</gene>
<protein>
    <recommendedName>
        <fullName evidence="1">Large ribosomal subunit protein bL36</fullName>
    </recommendedName>
    <alternativeName>
        <fullName evidence="2">50S ribosomal protein L36</fullName>
    </alternativeName>
</protein>
<proteinExistence type="inferred from homology"/>
<comment type="similarity">
    <text evidence="1">Belongs to the bacterial ribosomal protein bL36 family.</text>
</comment>
<organism>
    <name type="scientific">Photobacterium profundum (strain SS9)</name>
    <dbReference type="NCBI Taxonomy" id="298386"/>
    <lineage>
        <taxon>Bacteria</taxon>
        <taxon>Pseudomonadati</taxon>
        <taxon>Pseudomonadota</taxon>
        <taxon>Gammaproteobacteria</taxon>
        <taxon>Vibrionales</taxon>
        <taxon>Vibrionaceae</taxon>
        <taxon>Photobacterium</taxon>
    </lineage>
</organism>
<sequence length="37" mass="4318">MKVRASVKKICRNCKVIKRNGVVRIICIEPKHKQRQG</sequence>
<dbReference type="EMBL" id="CR378663">
    <property type="protein sequence ID" value="CAG18780.1"/>
    <property type="molecule type" value="Genomic_DNA"/>
</dbReference>
<dbReference type="RefSeq" id="WP_006232360.1">
    <property type="nucleotide sequence ID" value="NC_006370.1"/>
</dbReference>
<dbReference type="SMR" id="Q6LV95"/>
<dbReference type="STRING" id="298386.PBPRA0341"/>
<dbReference type="KEGG" id="ppr:PBPRA0341"/>
<dbReference type="eggNOG" id="COG0257">
    <property type="taxonomic scope" value="Bacteria"/>
</dbReference>
<dbReference type="HOGENOM" id="CLU_135723_6_2_6"/>
<dbReference type="Proteomes" id="UP000000593">
    <property type="component" value="Chromosome 1"/>
</dbReference>
<dbReference type="GO" id="GO:0005737">
    <property type="term" value="C:cytoplasm"/>
    <property type="evidence" value="ECO:0007669"/>
    <property type="project" value="UniProtKB-ARBA"/>
</dbReference>
<dbReference type="GO" id="GO:1990904">
    <property type="term" value="C:ribonucleoprotein complex"/>
    <property type="evidence" value="ECO:0007669"/>
    <property type="project" value="UniProtKB-KW"/>
</dbReference>
<dbReference type="GO" id="GO:0005840">
    <property type="term" value="C:ribosome"/>
    <property type="evidence" value="ECO:0007669"/>
    <property type="project" value="UniProtKB-KW"/>
</dbReference>
<dbReference type="GO" id="GO:0003735">
    <property type="term" value="F:structural constituent of ribosome"/>
    <property type="evidence" value="ECO:0007669"/>
    <property type="project" value="InterPro"/>
</dbReference>
<dbReference type="GO" id="GO:0006412">
    <property type="term" value="P:translation"/>
    <property type="evidence" value="ECO:0007669"/>
    <property type="project" value="UniProtKB-UniRule"/>
</dbReference>
<dbReference type="HAMAP" id="MF_00251">
    <property type="entry name" value="Ribosomal_bL36"/>
    <property type="match status" value="1"/>
</dbReference>
<dbReference type="InterPro" id="IPR000473">
    <property type="entry name" value="Ribosomal_bL36"/>
</dbReference>
<dbReference type="InterPro" id="IPR035977">
    <property type="entry name" value="Ribosomal_bL36_sp"/>
</dbReference>
<dbReference type="NCBIfam" id="TIGR01022">
    <property type="entry name" value="rpmJ_bact"/>
    <property type="match status" value="1"/>
</dbReference>
<dbReference type="PANTHER" id="PTHR42888">
    <property type="entry name" value="50S RIBOSOMAL PROTEIN L36, CHLOROPLASTIC"/>
    <property type="match status" value="1"/>
</dbReference>
<dbReference type="PANTHER" id="PTHR42888:SF1">
    <property type="entry name" value="LARGE RIBOSOMAL SUBUNIT PROTEIN BL36C"/>
    <property type="match status" value="1"/>
</dbReference>
<dbReference type="Pfam" id="PF00444">
    <property type="entry name" value="Ribosomal_L36"/>
    <property type="match status" value="1"/>
</dbReference>
<dbReference type="SUPFAM" id="SSF57840">
    <property type="entry name" value="Ribosomal protein L36"/>
    <property type="match status" value="1"/>
</dbReference>
<dbReference type="PROSITE" id="PS00828">
    <property type="entry name" value="RIBOSOMAL_L36"/>
    <property type="match status" value="1"/>
</dbReference>
<feature type="chain" id="PRO_0000126233" description="Large ribosomal subunit protein bL36">
    <location>
        <begin position="1"/>
        <end position="37"/>
    </location>
</feature>
<reference key="1">
    <citation type="journal article" date="2005" name="Science">
        <title>Life at depth: Photobacterium profundum genome sequence and expression analysis.</title>
        <authorList>
            <person name="Vezzi A."/>
            <person name="Campanaro S."/>
            <person name="D'Angelo M."/>
            <person name="Simonato F."/>
            <person name="Vitulo N."/>
            <person name="Lauro F.M."/>
            <person name="Cestaro A."/>
            <person name="Malacrida G."/>
            <person name="Simionati B."/>
            <person name="Cannata N."/>
            <person name="Romualdi C."/>
            <person name="Bartlett D.H."/>
            <person name="Valle G."/>
        </authorList>
    </citation>
    <scope>NUCLEOTIDE SEQUENCE [LARGE SCALE GENOMIC DNA]</scope>
    <source>
        <strain>ATCC BAA-1253 / SS9</strain>
    </source>
</reference>